<gene>
    <name evidence="1" type="primary">ureE</name>
    <name type="ordered locus">MAE_41100</name>
</gene>
<reference key="1">
    <citation type="journal article" date="2007" name="DNA Res.">
        <title>Complete genomic structure of the bloom-forming toxic cyanobacterium Microcystis aeruginosa NIES-843.</title>
        <authorList>
            <person name="Kaneko T."/>
            <person name="Nakajima N."/>
            <person name="Okamoto S."/>
            <person name="Suzuki I."/>
            <person name="Tanabe Y."/>
            <person name="Tamaoki M."/>
            <person name="Nakamura Y."/>
            <person name="Kasai F."/>
            <person name="Watanabe A."/>
            <person name="Kawashima K."/>
            <person name="Kishida Y."/>
            <person name="Ono A."/>
            <person name="Shimizu Y."/>
            <person name="Takahashi C."/>
            <person name="Minami C."/>
            <person name="Fujishiro T."/>
            <person name="Kohara M."/>
            <person name="Katoh M."/>
            <person name="Nakazaki N."/>
            <person name="Nakayama S."/>
            <person name="Yamada M."/>
            <person name="Tabata S."/>
            <person name="Watanabe M.M."/>
        </authorList>
    </citation>
    <scope>NUCLEOTIDE SEQUENCE [LARGE SCALE GENOMIC DNA]</scope>
    <source>
        <strain>NIES-843 / IAM M-247</strain>
    </source>
</reference>
<comment type="function">
    <text evidence="1">Involved in urease metallocenter assembly. Binds nickel. Probably functions as a nickel donor during metallocenter assembly.</text>
</comment>
<comment type="subcellular location">
    <subcellularLocation>
        <location evidence="1">Cytoplasm</location>
    </subcellularLocation>
</comment>
<comment type="similarity">
    <text evidence="1">Belongs to the UreE family.</text>
</comment>
<dbReference type="EMBL" id="AP009552">
    <property type="protein sequence ID" value="BAG03932.1"/>
    <property type="molecule type" value="Genomic_DNA"/>
</dbReference>
<dbReference type="RefSeq" id="WP_012266809.1">
    <property type="nucleotide sequence ID" value="NC_010296.1"/>
</dbReference>
<dbReference type="SMR" id="B0JR63"/>
<dbReference type="STRING" id="449447.MAE_41100"/>
<dbReference type="PaxDb" id="449447-MAE_41100"/>
<dbReference type="EnsemblBacteria" id="BAG03932">
    <property type="protein sequence ID" value="BAG03932"/>
    <property type="gene ID" value="MAE_41100"/>
</dbReference>
<dbReference type="KEGG" id="mar:MAE_41100"/>
<dbReference type="PATRIC" id="fig|449447.4.peg.3717"/>
<dbReference type="eggNOG" id="COG2371">
    <property type="taxonomic scope" value="Bacteria"/>
</dbReference>
<dbReference type="HOGENOM" id="CLU_093757_2_0_3"/>
<dbReference type="BioCyc" id="MAER449447:MAE_RS17795-MONOMER"/>
<dbReference type="Proteomes" id="UP000001510">
    <property type="component" value="Chromosome"/>
</dbReference>
<dbReference type="GO" id="GO:0005737">
    <property type="term" value="C:cytoplasm"/>
    <property type="evidence" value="ECO:0007669"/>
    <property type="project" value="UniProtKB-SubCell"/>
</dbReference>
<dbReference type="GO" id="GO:0016151">
    <property type="term" value="F:nickel cation binding"/>
    <property type="evidence" value="ECO:0007669"/>
    <property type="project" value="UniProtKB-UniRule"/>
</dbReference>
<dbReference type="GO" id="GO:0051082">
    <property type="term" value="F:unfolded protein binding"/>
    <property type="evidence" value="ECO:0007669"/>
    <property type="project" value="UniProtKB-UniRule"/>
</dbReference>
<dbReference type="GO" id="GO:0006457">
    <property type="term" value="P:protein folding"/>
    <property type="evidence" value="ECO:0007669"/>
    <property type="project" value="InterPro"/>
</dbReference>
<dbReference type="GO" id="GO:0065003">
    <property type="term" value="P:protein-containing complex assembly"/>
    <property type="evidence" value="ECO:0007669"/>
    <property type="project" value="InterPro"/>
</dbReference>
<dbReference type="GO" id="GO:0019627">
    <property type="term" value="P:urea metabolic process"/>
    <property type="evidence" value="ECO:0007669"/>
    <property type="project" value="InterPro"/>
</dbReference>
<dbReference type="CDD" id="cd00571">
    <property type="entry name" value="UreE"/>
    <property type="match status" value="1"/>
</dbReference>
<dbReference type="Gene3D" id="2.60.260.20">
    <property type="entry name" value="Urease metallochaperone UreE, N-terminal domain"/>
    <property type="match status" value="1"/>
</dbReference>
<dbReference type="Gene3D" id="3.30.70.790">
    <property type="entry name" value="UreE, C-terminal domain"/>
    <property type="match status" value="1"/>
</dbReference>
<dbReference type="HAMAP" id="MF_00822">
    <property type="entry name" value="UreE"/>
    <property type="match status" value="1"/>
</dbReference>
<dbReference type="InterPro" id="IPR012406">
    <property type="entry name" value="UreE"/>
</dbReference>
<dbReference type="InterPro" id="IPR007864">
    <property type="entry name" value="UreE_C_dom"/>
</dbReference>
<dbReference type="InterPro" id="IPR004029">
    <property type="entry name" value="UreE_N"/>
</dbReference>
<dbReference type="InterPro" id="IPR036118">
    <property type="entry name" value="UreE_N_sf"/>
</dbReference>
<dbReference type="NCBIfam" id="NF009751">
    <property type="entry name" value="PRK13261.1-1"/>
    <property type="match status" value="1"/>
</dbReference>
<dbReference type="Pfam" id="PF05194">
    <property type="entry name" value="UreE_C"/>
    <property type="match status" value="1"/>
</dbReference>
<dbReference type="Pfam" id="PF02814">
    <property type="entry name" value="UreE_N"/>
    <property type="match status" value="1"/>
</dbReference>
<dbReference type="PIRSF" id="PIRSF036402">
    <property type="entry name" value="Ureas_acces_UreE"/>
    <property type="match status" value="1"/>
</dbReference>
<dbReference type="SMART" id="SM00988">
    <property type="entry name" value="UreE_N"/>
    <property type="match status" value="1"/>
</dbReference>
<dbReference type="SUPFAM" id="SSF69737">
    <property type="entry name" value="Urease metallochaperone UreE, C-terminal domain"/>
    <property type="match status" value="1"/>
</dbReference>
<dbReference type="SUPFAM" id="SSF69287">
    <property type="entry name" value="Urease metallochaperone UreE, N-terminal domain"/>
    <property type="match status" value="1"/>
</dbReference>
<evidence type="ECO:0000255" key="1">
    <source>
        <dbReference type="HAMAP-Rule" id="MF_00822"/>
    </source>
</evidence>
<name>UREE_MICAN</name>
<feature type="chain" id="PRO_1000083899" description="Urease accessory protein UreE">
    <location>
        <begin position="1"/>
        <end position="158"/>
    </location>
</feature>
<protein>
    <recommendedName>
        <fullName evidence="1">Urease accessory protein UreE</fullName>
    </recommendedName>
</protein>
<accession>B0JR63</accession>
<keyword id="KW-0143">Chaperone</keyword>
<keyword id="KW-0963">Cytoplasm</keyword>
<keyword id="KW-0533">Nickel</keyword>
<keyword id="KW-0996">Nickel insertion</keyword>
<organism>
    <name type="scientific">Microcystis aeruginosa (strain NIES-843 / IAM M-2473)</name>
    <dbReference type="NCBI Taxonomy" id="449447"/>
    <lineage>
        <taxon>Bacteria</taxon>
        <taxon>Bacillati</taxon>
        <taxon>Cyanobacteriota</taxon>
        <taxon>Cyanophyceae</taxon>
        <taxon>Oscillatoriophycideae</taxon>
        <taxon>Chroococcales</taxon>
        <taxon>Microcystaceae</taxon>
        <taxon>Microcystis</taxon>
    </lineage>
</organism>
<sequence length="158" mass="17715">MLTFTERLPPRHTASSPPPETVLFSLLLTAEERTRSRYRLDSPEGFSLCFRLPRGTILQDRDFLRGENGEIIQIIAKPEPVITITAPSTDLLLKAAYHLGNRHVALEINPDYLRLAPDSVLQAMLEGLGLAVNEEIAPFNPEIGAYQHYHDLEEAKKG</sequence>
<proteinExistence type="inferred from homology"/>